<sequence>MSSTLSENQAPETGTARVKRGMAEQLKGGVIMDVVTPEQAKIAEDAGAVAVMALERVPADIRKDGGVARMSDPDMIEGIIGAVSIPVMAKSRIGHFVEAQVLQSLGVDYIDESEVLTPADEVNHSDKFAFTTPFVCGATNLGEALRRIAEGAAMIRSKGEAGTGNVVEAVRHLRQIKNEIARLRGYDNNELYAAAKELRAPYELVKEVSELGRLPVVLFSAGGVATPADAALMRQLGAEGVFVGSGIFKSGDPAKRAAAIVKATTFYDDPKIIADASRNLGEAMVGINCDTLPETERYANRGW</sequence>
<comment type="function">
    <text evidence="1">Catalyzes the formation of pyridoxal 5'-phosphate from ribose 5-phosphate (RBP), glyceraldehyde 3-phosphate (G3P) and ammonia. The ammonia is provided by the PdxT subunit. Can also use ribulose 5-phosphate and dihydroxyacetone phosphate as substrates, resulting from enzyme-catalyzed isomerization of RBP and G3P, respectively.</text>
</comment>
<comment type="catalytic activity">
    <reaction evidence="1">
        <text>aldehydo-D-ribose 5-phosphate + D-glyceraldehyde 3-phosphate + L-glutamine = pyridoxal 5'-phosphate + L-glutamate + phosphate + 3 H2O + H(+)</text>
        <dbReference type="Rhea" id="RHEA:31507"/>
        <dbReference type="ChEBI" id="CHEBI:15377"/>
        <dbReference type="ChEBI" id="CHEBI:15378"/>
        <dbReference type="ChEBI" id="CHEBI:29985"/>
        <dbReference type="ChEBI" id="CHEBI:43474"/>
        <dbReference type="ChEBI" id="CHEBI:58273"/>
        <dbReference type="ChEBI" id="CHEBI:58359"/>
        <dbReference type="ChEBI" id="CHEBI:59776"/>
        <dbReference type="ChEBI" id="CHEBI:597326"/>
        <dbReference type="EC" id="4.3.3.6"/>
    </reaction>
</comment>
<comment type="pathway">
    <text evidence="1">Cofactor biosynthesis; pyridoxal 5'-phosphate biosynthesis.</text>
</comment>
<comment type="subunit">
    <text evidence="1">In the presence of PdxT, forms a dodecamer of heterodimers.</text>
</comment>
<comment type="similarity">
    <text evidence="1">Belongs to the PdxS/SNZ family.</text>
</comment>
<gene>
    <name evidence="1" type="primary">pdxS</name>
    <name type="ordered locus">SCO1523</name>
    <name type="ORF">SCL2.13c</name>
</gene>
<dbReference type="EC" id="4.3.3.6" evidence="1"/>
<dbReference type="EMBL" id="AL939109">
    <property type="protein sequence ID" value="CAB70925.1"/>
    <property type="molecule type" value="Genomic_DNA"/>
</dbReference>
<dbReference type="RefSeq" id="NP_625802.1">
    <property type="nucleotide sequence ID" value="NC_003888.3"/>
</dbReference>
<dbReference type="RefSeq" id="WP_003977304.1">
    <property type="nucleotide sequence ID" value="NZ_VNID01000021.1"/>
</dbReference>
<dbReference type="SMR" id="Q9L286"/>
<dbReference type="FunCoup" id="Q9L286">
    <property type="interactions" value="266"/>
</dbReference>
<dbReference type="STRING" id="100226.gene:17759109"/>
<dbReference type="PaxDb" id="100226-SCO1523"/>
<dbReference type="GeneID" id="91387510"/>
<dbReference type="KEGG" id="sco:SCO1523"/>
<dbReference type="PATRIC" id="fig|100226.15.peg.1532"/>
<dbReference type="eggNOG" id="COG0214">
    <property type="taxonomic scope" value="Bacteria"/>
</dbReference>
<dbReference type="HOGENOM" id="CLU_055352_1_0_11"/>
<dbReference type="InParanoid" id="Q9L286"/>
<dbReference type="OrthoDB" id="9772545at2"/>
<dbReference type="PhylomeDB" id="Q9L286"/>
<dbReference type="UniPathway" id="UPA00245"/>
<dbReference type="Proteomes" id="UP000001973">
    <property type="component" value="Chromosome"/>
</dbReference>
<dbReference type="GO" id="GO:0016843">
    <property type="term" value="F:amine-lyase activity"/>
    <property type="evidence" value="ECO:0000318"/>
    <property type="project" value="GO_Central"/>
</dbReference>
<dbReference type="GO" id="GO:0036381">
    <property type="term" value="F:pyridoxal 5'-phosphate synthase (glutamine hydrolysing) activity"/>
    <property type="evidence" value="ECO:0007669"/>
    <property type="project" value="UniProtKB-UniRule"/>
</dbReference>
<dbReference type="GO" id="GO:0006520">
    <property type="term" value="P:amino acid metabolic process"/>
    <property type="evidence" value="ECO:0000318"/>
    <property type="project" value="GO_Central"/>
</dbReference>
<dbReference type="GO" id="GO:0042823">
    <property type="term" value="P:pyridoxal phosphate biosynthetic process"/>
    <property type="evidence" value="ECO:0000318"/>
    <property type="project" value="GO_Central"/>
</dbReference>
<dbReference type="GO" id="GO:0008615">
    <property type="term" value="P:pyridoxine biosynthetic process"/>
    <property type="evidence" value="ECO:0000318"/>
    <property type="project" value="GO_Central"/>
</dbReference>
<dbReference type="CDD" id="cd04727">
    <property type="entry name" value="pdxS"/>
    <property type="match status" value="1"/>
</dbReference>
<dbReference type="FunFam" id="3.20.20.70:FF:000001">
    <property type="entry name" value="Pyridoxine biosynthesis protein PDX1"/>
    <property type="match status" value="1"/>
</dbReference>
<dbReference type="Gene3D" id="3.20.20.70">
    <property type="entry name" value="Aldolase class I"/>
    <property type="match status" value="1"/>
</dbReference>
<dbReference type="HAMAP" id="MF_01824">
    <property type="entry name" value="PdxS"/>
    <property type="match status" value="1"/>
</dbReference>
<dbReference type="InterPro" id="IPR013785">
    <property type="entry name" value="Aldolase_TIM"/>
</dbReference>
<dbReference type="InterPro" id="IPR001852">
    <property type="entry name" value="PdxS/SNZ"/>
</dbReference>
<dbReference type="InterPro" id="IPR033755">
    <property type="entry name" value="PdxS/SNZ_N"/>
</dbReference>
<dbReference type="InterPro" id="IPR011060">
    <property type="entry name" value="RibuloseP-bd_barrel"/>
</dbReference>
<dbReference type="NCBIfam" id="NF003215">
    <property type="entry name" value="PRK04180.1"/>
    <property type="match status" value="1"/>
</dbReference>
<dbReference type="NCBIfam" id="TIGR00343">
    <property type="entry name" value="pyridoxal 5'-phosphate synthase lyase subunit PdxS"/>
    <property type="match status" value="1"/>
</dbReference>
<dbReference type="PANTHER" id="PTHR31829">
    <property type="entry name" value="PYRIDOXAL 5'-PHOSPHATE SYNTHASE SUBUNIT SNZ1-RELATED"/>
    <property type="match status" value="1"/>
</dbReference>
<dbReference type="PANTHER" id="PTHR31829:SF0">
    <property type="entry name" value="PYRIDOXAL 5'-PHOSPHATE SYNTHASE SUBUNIT SNZ1-RELATED"/>
    <property type="match status" value="1"/>
</dbReference>
<dbReference type="Pfam" id="PF01680">
    <property type="entry name" value="SOR_SNZ"/>
    <property type="match status" value="1"/>
</dbReference>
<dbReference type="PIRSF" id="PIRSF029271">
    <property type="entry name" value="Pdx1"/>
    <property type="match status" value="1"/>
</dbReference>
<dbReference type="SUPFAM" id="SSF51366">
    <property type="entry name" value="Ribulose-phoshate binding barrel"/>
    <property type="match status" value="1"/>
</dbReference>
<dbReference type="PROSITE" id="PS01235">
    <property type="entry name" value="PDXS_SNZ_1"/>
    <property type="match status" value="1"/>
</dbReference>
<dbReference type="PROSITE" id="PS51129">
    <property type="entry name" value="PDXS_SNZ_2"/>
    <property type="match status" value="1"/>
</dbReference>
<keyword id="KW-0456">Lyase</keyword>
<keyword id="KW-0663">Pyridoxal phosphate</keyword>
<keyword id="KW-1185">Reference proteome</keyword>
<keyword id="KW-0704">Schiff base</keyword>
<accession>Q9L286</accession>
<evidence type="ECO:0000255" key="1">
    <source>
        <dbReference type="HAMAP-Rule" id="MF_01824"/>
    </source>
</evidence>
<reference key="1">
    <citation type="journal article" date="2002" name="Nature">
        <title>Complete genome sequence of the model actinomycete Streptomyces coelicolor A3(2).</title>
        <authorList>
            <person name="Bentley S.D."/>
            <person name="Chater K.F."/>
            <person name="Cerdeno-Tarraga A.-M."/>
            <person name="Challis G.L."/>
            <person name="Thomson N.R."/>
            <person name="James K.D."/>
            <person name="Harris D.E."/>
            <person name="Quail M.A."/>
            <person name="Kieser H."/>
            <person name="Harper D."/>
            <person name="Bateman A."/>
            <person name="Brown S."/>
            <person name="Chandra G."/>
            <person name="Chen C.W."/>
            <person name="Collins M."/>
            <person name="Cronin A."/>
            <person name="Fraser A."/>
            <person name="Goble A."/>
            <person name="Hidalgo J."/>
            <person name="Hornsby T."/>
            <person name="Howarth S."/>
            <person name="Huang C.-H."/>
            <person name="Kieser T."/>
            <person name="Larke L."/>
            <person name="Murphy L.D."/>
            <person name="Oliver K."/>
            <person name="O'Neil S."/>
            <person name="Rabbinowitsch E."/>
            <person name="Rajandream M.A."/>
            <person name="Rutherford K.M."/>
            <person name="Rutter S."/>
            <person name="Seeger K."/>
            <person name="Saunders D."/>
            <person name="Sharp S."/>
            <person name="Squares R."/>
            <person name="Squares S."/>
            <person name="Taylor K."/>
            <person name="Warren T."/>
            <person name="Wietzorrek A."/>
            <person name="Woodward J.R."/>
            <person name="Barrell B.G."/>
            <person name="Parkhill J."/>
            <person name="Hopwood D.A."/>
        </authorList>
    </citation>
    <scope>NUCLEOTIDE SEQUENCE [LARGE SCALE GENOMIC DNA]</scope>
    <source>
        <strain>ATCC BAA-471 / A3(2) / M145</strain>
    </source>
</reference>
<name>PDXS_STRCO</name>
<feature type="chain" id="PRO_0000109420" description="Pyridoxal 5'-phosphate synthase subunit PdxS">
    <location>
        <begin position="1"/>
        <end position="303"/>
    </location>
</feature>
<feature type="active site" description="Schiff-base intermediate with D-ribose 5-phosphate" evidence="1">
    <location>
        <position position="90"/>
    </location>
</feature>
<feature type="binding site" evidence="1">
    <location>
        <position position="33"/>
    </location>
    <ligand>
        <name>D-ribose 5-phosphate</name>
        <dbReference type="ChEBI" id="CHEBI:78346"/>
    </ligand>
</feature>
<feature type="binding site" evidence="1">
    <location>
        <position position="162"/>
    </location>
    <ligand>
        <name>D-ribose 5-phosphate</name>
        <dbReference type="ChEBI" id="CHEBI:78346"/>
    </ligand>
</feature>
<feature type="binding site" evidence="1">
    <location>
        <position position="174"/>
    </location>
    <ligand>
        <name>D-glyceraldehyde 3-phosphate</name>
        <dbReference type="ChEBI" id="CHEBI:59776"/>
    </ligand>
</feature>
<feature type="binding site" evidence="1">
    <location>
        <position position="223"/>
    </location>
    <ligand>
        <name>D-ribose 5-phosphate</name>
        <dbReference type="ChEBI" id="CHEBI:78346"/>
    </ligand>
</feature>
<feature type="binding site" evidence="1">
    <location>
        <begin position="244"/>
        <end position="245"/>
    </location>
    <ligand>
        <name>D-ribose 5-phosphate</name>
        <dbReference type="ChEBI" id="CHEBI:78346"/>
    </ligand>
</feature>
<proteinExistence type="inferred from homology"/>
<protein>
    <recommendedName>
        <fullName evidence="1">Pyridoxal 5'-phosphate synthase subunit PdxS</fullName>
        <shortName evidence="1">PLP synthase subunit PdxS</shortName>
        <ecNumber evidence="1">4.3.3.6</ecNumber>
    </recommendedName>
    <alternativeName>
        <fullName evidence="1">Pdx1</fullName>
    </alternativeName>
</protein>
<organism>
    <name type="scientific">Streptomyces coelicolor (strain ATCC BAA-471 / A3(2) / M145)</name>
    <dbReference type="NCBI Taxonomy" id="100226"/>
    <lineage>
        <taxon>Bacteria</taxon>
        <taxon>Bacillati</taxon>
        <taxon>Actinomycetota</taxon>
        <taxon>Actinomycetes</taxon>
        <taxon>Kitasatosporales</taxon>
        <taxon>Streptomycetaceae</taxon>
        <taxon>Streptomyces</taxon>
        <taxon>Streptomyces albidoflavus group</taxon>
    </lineage>
</organism>